<feature type="chain" id="PRO_1000143099" description="Small ribosomal subunit protein uS15">
    <location>
        <begin position="1"/>
        <end position="89"/>
    </location>
</feature>
<organism>
    <name type="scientific">Cupriavidus taiwanensis (strain DSM 17343 / BCRC 17206 / CCUG 44338 / CIP 107171 / LMG 19424 / R1)</name>
    <name type="common">Ralstonia taiwanensis (strain LMG 19424)</name>
    <dbReference type="NCBI Taxonomy" id="977880"/>
    <lineage>
        <taxon>Bacteria</taxon>
        <taxon>Pseudomonadati</taxon>
        <taxon>Pseudomonadota</taxon>
        <taxon>Betaproteobacteria</taxon>
        <taxon>Burkholderiales</taxon>
        <taxon>Burkholderiaceae</taxon>
        <taxon>Cupriavidus</taxon>
    </lineage>
</organism>
<proteinExistence type="inferred from homology"/>
<sequence>MAVADINKSEVIKQFARGANDTGSPEVQVALLTTRINELTPHFKANMKDHHSRRGLLRMVSRRRRLLDYLKSNDADRYRALIEKLGLRK</sequence>
<accession>B3R3W1</accession>
<name>RS15_CUPTR</name>
<comment type="function">
    <text evidence="1">One of the primary rRNA binding proteins, it binds directly to 16S rRNA where it helps nucleate assembly of the platform of the 30S subunit by binding and bridging several RNA helices of the 16S rRNA.</text>
</comment>
<comment type="function">
    <text evidence="1">Forms an intersubunit bridge (bridge B4) with the 23S rRNA of the 50S subunit in the ribosome.</text>
</comment>
<comment type="subunit">
    <text evidence="1">Part of the 30S ribosomal subunit. Forms a bridge to the 50S subunit in the 70S ribosome, contacting the 23S rRNA.</text>
</comment>
<comment type="similarity">
    <text evidence="1">Belongs to the universal ribosomal protein uS15 family.</text>
</comment>
<reference key="1">
    <citation type="journal article" date="2008" name="Genome Res.">
        <title>Genome sequence of the beta-rhizobium Cupriavidus taiwanensis and comparative genomics of rhizobia.</title>
        <authorList>
            <person name="Amadou C."/>
            <person name="Pascal G."/>
            <person name="Mangenot S."/>
            <person name="Glew M."/>
            <person name="Bontemps C."/>
            <person name="Capela D."/>
            <person name="Carrere S."/>
            <person name="Cruveiller S."/>
            <person name="Dossat C."/>
            <person name="Lajus A."/>
            <person name="Marchetti M."/>
            <person name="Poinsot V."/>
            <person name="Rouy Z."/>
            <person name="Servin B."/>
            <person name="Saad M."/>
            <person name="Schenowitz C."/>
            <person name="Barbe V."/>
            <person name="Batut J."/>
            <person name="Medigue C."/>
            <person name="Masson-Boivin C."/>
        </authorList>
    </citation>
    <scope>NUCLEOTIDE SEQUENCE [LARGE SCALE GENOMIC DNA]</scope>
    <source>
        <strain>DSM 17343 / BCRC 17206 / CCUG 44338 / CIP 107171 / LMG 19424 / R1</strain>
    </source>
</reference>
<gene>
    <name evidence="1" type="primary">rpsO</name>
    <name type="ordered locus">RALTA_A1028</name>
</gene>
<evidence type="ECO:0000255" key="1">
    <source>
        <dbReference type="HAMAP-Rule" id="MF_01343"/>
    </source>
</evidence>
<evidence type="ECO:0000305" key="2"/>
<dbReference type="EMBL" id="CU633749">
    <property type="protein sequence ID" value="CAQ68993.1"/>
    <property type="molecule type" value="Genomic_DNA"/>
</dbReference>
<dbReference type="RefSeq" id="WP_010809136.1">
    <property type="nucleotide sequence ID" value="NC_010528.1"/>
</dbReference>
<dbReference type="SMR" id="B3R3W1"/>
<dbReference type="GeneID" id="34311432"/>
<dbReference type="KEGG" id="cti:RALTA_A1028"/>
<dbReference type="eggNOG" id="COG0184">
    <property type="taxonomic scope" value="Bacteria"/>
</dbReference>
<dbReference type="HOGENOM" id="CLU_148518_0_0_4"/>
<dbReference type="BioCyc" id="CTAI977880:RALTA_RS04885-MONOMER"/>
<dbReference type="Proteomes" id="UP000001692">
    <property type="component" value="Chromosome 1"/>
</dbReference>
<dbReference type="GO" id="GO:0022627">
    <property type="term" value="C:cytosolic small ribosomal subunit"/>
    <property type="evidence" value="ECO:0007669"/>
    <property type="project" value="TreeGrafter"/>
</dbReference>
<dbReference type="GO" id="GO:0019843">
    <property type="term" value="F:rRNA binding"/>
    <property type="evidence" value="ECO:0007669"/>
    <property type="project" value="UniProtKB-UniRule"/>
</dbReference>
<dbReference type="GO" id="GO:0003735">
    <property type="term" value="F:structural constituent of ribosome"/>
    <property type="evidence" value="ECO:0007669"/>
    <property type="project" value="InterPro"/>
</dbReference>
<dbReference type="GO" id="GO:0006412">
    <property type="term" value="P:translation"/>
    <property type="evidence" value="ECO:0007669"/>
    <property type="project" value="UniProtKB-UniRule"/>
</dbReference>
<dbReference type="CDD" id="cd00353">
    <property type="entry name" value="Ribosomal_S15p_S13e"/>
    <property type="match status" value="1"/>
</dbReference>
<dbReference type="FunFam" id="1.10.287.10:FF:000002">
    <property type="entry name" value="30S ribosomal protein S15"/>
    <property type="match status" value="1"/>
</dbReference>
<dbReference type="Gene3D" id="6.10.250.3130">
    <property type="match status" value="1"/>
</dbReference>
<dbReference type="Gene3D" id="1.10.287.10">
    <property type="entry name" value="S15/NS1, RNA-binding"/>
    <property type="match status" value="1"/>
</dbReference>
<dbReference type="HAMAP" id="MF_01343_B">
    <property type="entry name" value="Ribosomal_uS15_B"/>
    <property type="match status" value="1"/>
</dbReference>
<dbReference type="InterPro" id="IPR000589">
    <property type="entry name" value="Ribosomal_uS15"/>
</dbReference>
<dbReference type="InterPro" id="IPR005290">
    <property type="entry name" value="Ribosomal_uS15_bac-type"/>
</dbReference>
<dbReference type="InterPro" id="IPR009068">
    <property type="entry name" value="uS15_NS1_RNA-bd_sf"/>
</dbReference>
<dbReference type="NCBIfam" id="TIGR00952">
    <property type="entry name" value="S15_bact"/>
    <property type="match status" value="1"/>
</dbReference>
<dbReference type="PANTHER" id="PTHR23321">
    <property type="entry name" value="RIBOSOMAL PROTEIN S15, BACTERIAL AND ORGANELLAR"/>
    <property type="match status" value="1"/>
</dbReference>
<dbReference type="PANTHER" id="PTHR23321:SF26">
    <property type="entry name" value="SMALL RIBOSOMAL SUBUNIT PROTEIN US15M"/>
    <property type="match status" value="1"/>
</dbReference>
<dbReference type="Pfam" id="PF00312">
    <property type="entry name" value="Ribosomal_S15"/>
    <property type="match status" value="1"/>
</dbReference>
<dbReference type="SMART" id="SM01387">
    <property type="entry name" value="Ribosomal_S15"/>
    <property type="match status" value="1"/>
</dbReference>
<dbReference type="SUPFAM" id="SSF47060">
    <property type="entry name" value="S15/NS1 RNA-binding domain"/>
    <property type="match status" value="1"/>
</dbReference>
<dbReference type="PROSITE" id="PS00362">
    <property type="entry name" value="RIBOSOMAL_S15"/>
    <property type="match status" value="1"/>
</dbReference>
<protein>
    <recommendedName>
        <fullName evidence="1">Small ribosomal subunit protein uS15</fullName>
    </recommendedName>
    <alternativeName>
        <fullName evidence="2">30S ribosomal protein S15</fullName>
    </alternativeName>
</protein>
<keyword id="KW-0687">Ribonucleoprotein</keyword>
<keyword id="KW-0689">Ribosomal protein</keyword>
<keyword id="KW-0694">RNA-binding</keyword>
<keyword id="KW-0699">rRNA-binding</keyword>